<reference key="1">
    <citation type="journal article" date="2007" name="Proc. Natl. Acad. Sci. U.S.A.">
        <title>Genome plasticity of BCG and impact on vaccine efficacy.</title>
        <authorList>
            <person name="Brosch R."/>
            <person name="Gordon S.V."/>
            <person name="Garnier T."/>
            <person name="Eiglmeier K."/>
            <person name="Frigui W."/>
            <person name="Valenti P."/>
            <person name="Dos Santos S."/>
            <person name="Duthoy S."/>
            <person name="Lacroix C."/>
            <person name="Garcia-Pelayo C."/>
            <person name="Inwald J.K."/>
            <person name="Golby P."/>
            <person name="Garcia J.N."/>
            <person name="Hewinson R.G."/>
            <person name="Behr M.A."/>
            <person name="Quail M.A."/>
            <person name="Churcher C."/>
            <person name="Barrell B.G."/>
            <person name="Parkhill J."/>
            <person name="Cole S.T."/>
        </authorList>
    </citation>
    <scope>NUCLEOTIDE SEQUENCE [LARGE SCALE GENOMIC DNA]</scope>
    <source>
        <strain>BCG / Pasteur 1173P2</strain>
    </source>
</reference>
<sequence>MSAPDVRLTAWVHGWVQGVGFRWWTRCRALELGLTGYAANHADGRVLVVAQGPRAACQKLLQLLQGDTTPGRVAKVVADWSQSTEQITGFSER</sequence>
<feature type="chain" id="PRO_0000326748" description="Acylphosphatase">
    <location>
        <begin position="1"/>
        <end position="93"/>
    </location>
</feature>
<feature type="domain" description="Acylphosphatase-like" evidence="1">
    <location>
        <begin position="7"/>
        <end position="93"/>
    </location>
</feature>
<feature type="active site" evidence="1">
    <location>
        <position position="22"/>
    </location>
</feature>
<feature type="active site" evidence="1">
    <location>
        <position position="40"/>
    </location>
</feature>
<dbReference type="EC" id="3.6.1.7"/>
<dbReference type="EMBL" id="AM408590">
    <property type="protein sequence ID" value="CAL72933.1"/>
    <property type="molecule type" value="Genomic_DNA"/>
</dbReference>
<dbReference type="RefSeq" id="WP_003414811.1">
    <property type="nucleotide sequence ID" value="NC_008769.1"/>
</dbReference>
<dbReference type="SMR" id="A1KMR7"/>
<dbReference type="KEGG" id="mbb:BCG_2944c"/>
<dbReference type="HOGENOM" id="CLU_141932_3_0_11"/>
<dbReference type="Proteomes" id="UP000001472">
    <property type="component" value="Chromosome"/>
</dbReference>
<dbReference type="GO" id="GO:0003998">
    <property type="term" value="F:acylphosphatase activity"/>
    <property type="evidence" value="ECO:0007669"/>
    <property type="project" value="UniProtKB-EC"/>
</dbReference>
<dbReference type="Gene3D" id="3.30.70.100">
    <property type="match status" value="1"/>
</dbReference>
<dbReference type="InterPro" id="IPR020456">
    <property type="entry name" value="Acylphosphatase"/>
</dbReference>
<dbReference type="InterPro" id="IPR001792">
    <property type="entry name" value="Acylphosphatase-like_dom"/>
</dbReference>
<dbReference type="InterPro" id="IPR036046">
    <property type="entry name" value="Acylphosphatase-like_dom_sf"/>
</dbReference>
<dbReference type="InterPro" id="IPR017968">
    <property type="entry name" value="Acylphosphatase_CS"/>
</dbReference>
<dbReference type="NCBIfam" id="NF010997">
    <property type="entry name" value="PRK14422.1"/>
    <property type="match status" value="1"/>
</dbReference>
<dbReference type="PANTHER" id="PTHR47268">
    <property type="entry name" value="ACYLPHOSPHATASE"/>
    <property type="match status" value="1"/>
</dbReference>
<dbReference type="PANTHER" id="PTHR47268:SF4">
    <property type="entry name" value="ACYLPHOSPHATASE"/>
    <property type="match status" value="1"/>
</dbReference>
<dbReference type="Pfam" id="PF00708">
    <property type="entry name" value="Acylphosphatase"/>
    <property type="match status" value="1"/>
</dbReference>
<dbReference type="SUPFAM" id="SSF54975">
    <property type="entry name" value="Acylphosphatase/BLUF domain-like"/>
    <property type="match status" value="1"/>
</dbReference>
<dbReference type="PROSITE" id="PS00150">
    <property type="entry name" value="ACYLPHOSPHATASE_1"/>
    <property type="match status" value="1"/>
</dbReference>
<dbReference type="PROSITE" id="PS00151">
    <property type="entry name" value="ACYLPHOSPHATASE_2"/>
    <property type="match status" value="1"/>
</dbReference>
<dbReference type="PROSITE" id="PS51160">
    <property type="entry name" value="ACYLPHOSPHATASE_3"/>
    <property type="match status" value="1"/>
</dbReference>
<protein>
    <recommendedName>
        <fullName>Acylphosphatase</fullName>
        <ecNumber>3.6.1.7</ecNumber>
    </recommendedName>
    <alternativeName>
        <fullName>Acylphosphate phosphohydrolase</fullName>
    </alternativeName>
</protein>
<evidence type="ECO:0000255" key="1">
    <source>
        <dbReference type="PROSITE-ProRule" id="PRU00520"/>
    </source>
</evidence>
<evidence type="ECO:0000305" key="2"/>
<proteinExistence type="inferred from homology"/>
<name>ACYP_MYCBP</name>
<accession>A1KMR7</accession>
<keyword id="KW-0378">Hydrolase</keyword>
<comment type="catalytic activity">
    <reaction>
        <text>an acyl phosphate + H2O = a carboxylate + phosphate + H(+)</text>
        <dbReference type="Rhea" id="RHEA:14965"/>
        <dbReference type="ChEBI" id="CHEBI:15377"/>
        <dbReference type="ChEBI" id="CHEBI:15378"/>
        <dbReference type="ChEBI" id="CHEBI:29067"/>
        <dbReference type="ChEBI" id="CHEBI:43474"/>
        <dbReference type="ChEBI" id="CHEBI:59918"/>
        <dbReference type="EC" id="3.6.1.7"/>
    </reaction>
</comment>
<comment type="similarity">
    <text evidence="2">Belongs to the acylphosphatase family.</text>
</comment>
<organism>
    <name type="scientific">Mycobacterium bovis (strain BCG / Pasteur 1173P2)</name>
    <dbReference type="NCBI Taxonomy" id="410289"/>
    <lineage>
        <taxon>Bacteria</taxon>
        <taxon>Bacillati</taxon>
        <taxon>Actinomycetota</taxon>
        <taxon>Actinomycetes</taxon>
        <taxon>Mycobacteriales</taxon>
        <taxon>Mycobacteriaceae</taxon>
        <taxon>Mycobacterium</taxon>
        <taxon>Mycobacterium tuberculosis complex</taxon>
    </lineage>
</organism>
<gene>
    <name type="primary">acyP</name>
    <name type="ordered locus">BCG_2944c</name>
</gene>